<dbReference type="EC" id="4.1.1.59" evidence="2"/>
<dbReference type="EC" id="4.1.1.63" evidence="2"/>
<dbReference type="EMBL" id="AL935263">
    <property type="protein sequence ID" value="CCC80016.1"/>
    <property type="molecule type" value="Genomic_DNA"/>
</dbReference>
<dbReference type="RefSeq" id="WP_003644796.1">
    <property type="nucleotide sequence ID" value="NC_004567.2"/>
</dbReference>
<dbReference type="RefSeq" id="YP_004890530.1">
    <property type="nucleotide sequence ID" value="NC_004567.2"/>
</dbReference>
<dbReference type="SMR" id="F9US27"/>
<dbReference type="STRING" id="220668.lp_2945"/>
<dbReference type="EnsemblBacteria" id="CCC80016">
    <property type="protein sequence ID" value="CCC80016"/>
    <property type="gene ID" value="lp_2945"/>
</dbReference>
<dbReference type="KEGG" id="lpl:lp_2945"/>
<dbReference type="PATRIC" id="fig|220668.9.peg.2459"/>
<dbReference type="eggNOG" id="COG0043">
    <property type="taxonomic scope" value="Bacteria"/>
</dbReference>
<dbReference type="HOGENOM" id="CLU_023348_5_1_9"/>
<dbReference type="OrthoDB" id="9809841at2"/>
<dbReference type="PhylomeDB" id="F9US27"/>
<dbReference type="BioCyc" id="MetaCyc:MONOMER-19902"/>
<dbReference type="Proteomes" id="UP000000432">
    <property type="component" value="Chromosome"/>
</dbReference>
<dbReference type="GO" id="GO:0005829">
    <property type="term" value="C:cytosol"/>
    <property type="evidence" value="ECO:0007669"/>
    <property type="project" value="TreeGrafter"/>
</dbReference>
<dbReference type="GO" id="GO:0008694">
    <property type="term" value="F:3-octaprenyl-4-hydroxybenzoate carboxy-lyase activity"/>
    <property type="evidence" value="ECO:0007669"/>
    <property type="project" value="TreeGrafter"/>
</dbReference>
<dbReference type="GO" id="GO:0018798">
    <property type="term" value="F:gallate decarboxylase activity"/>
    <property type="evidence" value="ECO:0007669"/>
    <property type="project" value="UniProtKB-EC"/>
</dbReference>
<dbReference type="GO" id="GO:0046872">
    <property type="term" value="F:metal ion binding"/>
    <property type="evidence" value="ECO:0007669"/>
    <property type="project" value="UniProtKB-KW"/>
</dbReference>
<dbReference type="GO" id="GO:0050223">
    <property type="term" value="F:protocatechuate decarboxylase activity"/>
    <property type="evidence" value="ECO:0007669"/>
    <property type="project" value="UniProtKB-EC"/>
</dbReference>
<dbReference type="GO" id="GO:0006744">
    <property type="term" value="P:ubiquinone biosynthetic process"/>
    <property type="evidence" value="ECO:0007669"/>
    <property type="project" value="TreeGrafter"/>
</dbReference>
<dbReference type="Gene3D" id="3.40.1670.10">
    <property type="entry name" value="UbiD C-terminal domain-like"/>
    <property type="match status" value="1"/>
</dbReference>
<dbReference type="InterPro" id="IPR002830">
    <property type="entry name" value="UbiD"/>
</dbReference>
<dbReference type="InterPro" id="IPR049381">
    <property type="entry name" value="UbiD-like_C"/>
</dbReference>
<dbReference type="InterPro" id="IPR049383">
    <property type="entry name" value="UbiD-like_N"/>
</dbReference>
<dbReference type="InterPro" id="IPR048304">
    <property type="entry name" value="UbiD_Rift_dom"/>
</dbReference>
<dbReference type="PANTHER" id="PTHR30108">
    <property type="entry name" value="3-OCTAPRENYL-4-HYDROXYBENZOATE CARBOXY-LYASE-RELATED"/>
    <property type="match status" value="1"/>
</dbReference>
<dbReference type="PANTHER" id="PTHR30108:SF17">
    <property type="entry name" value="FERULIC ACID DECARBOXYLASE 1"/>
    <property type="match status" value="1"/>
</dbReference>
<dbReference type="Pfam" id="PF01977">
    <property type="entry name" value="UbiD"/>
    <property type="match status" value="1"/>
</dbReference>
<dbReference type="Pfam" id="PF20696">
    <property type="entry name" value="UbiD_C"/>
    <property type="match status" value="1"/>
</dbReference>
<dbReference type="Pfam" id="PF20695">
    <property type="entry name" value="UbiD_N"/>
    <property type="match status" value="1"/>
</dbReference>
<dbReference type="SUPFAM" id="SSF50475">
    <property type="entry name" value="FMN-binding split barrel"/>
    <property type="match status" value="1"/>
</dbReference>
<dbReference type="SUPFAM" id="SSF143968">
    <property type="entry name" value="UbiD C-terminal domain-like"/>
    <property type="match status" value="1"/>
</dbReference>
<reference key="1">
    <citation type="journal article" date="2003" name="Proc. Natl. Acad. Sci. U.S.A.">
        <title>Complete genome sequence of Lactobacillus plantarum WCFS1.</title>
        <authorList>
            <person name="Kleerebezem M."/>
            <person name="Boekhorst J."/>
            <person name="van Kranenburg R."/>
            <person name="Molenaar D."/>
            <person name="Kuipers O.P."/>
            <person name="Leer R."/>
            <person name="Tarchini R."/>
            <person name="Peters S.A."/>
            <person name="Sandbrink H.M."/>
            <person name="Fiers M.W.E.J."/>
            <person name="Stiekema W."/>
            <person name="Klein Lankhorst R.M."/>
            <person name="Bron P.A."/>
            <person name="Hoffer S.M."/>
            <person name="Nierop Groot M.N."/>
            <person name="Kerkhoven R."/>
            <person name="De Vries M."/>
            <person name="Ursing B."/>
            <person name="De Vos W.M."/>
            <person name="Siezen R.J."/>
        </authorList>
    </citation>
    <scope>NUCLEOTIDE SEQUENCE [LARGE SCALE GENOMIC DNA]</scope>
    <source>
        <strain evidence="7">ATCC BAA-793 / NCIMB 8826 / WCFS1</strain>
    </source>
</reference>
<reference key="2">
    <citation type="journal article" date="2012" name="J. Bacteriol.">
        <title>Complete resequencing and reannotation of the Lactobacillus plantarum WCFS1 genome.</title>
        <authorList>
            <person name="Siezen R.J."/>
            <person name="Francke C."/>
            <person name="Renckens B."/>
            <person name="Boekhorst J."/>
            <person name="Wels M."/>
            <person name="Kleerebezem M."/>
            <person name="van Hijum S.A."/>
        </authorList>
    </citation>
    <scope>NUCLEOTIDE SEQUENCE [LARGE SCALE GENOMIC DNA]</scope>
    <scope>GENOME REANNOTATION</scope>
    <source>
        <strain>ATCC BAA-793 / NCIMB 8826 / WCFS1</strain>
    </source>
</reference>
<reference key="3">
    <citation type="journal article" date="2013" name="Appl. Environ. Microbiol.">
        <title>Uncovering the Lactobacillus plantarum WCFS1 gallate decarboxylase involved in tannin degradation.</title>
        <authorList>
            <person name="Jimenez N."/>
            <person name="Curiel J.A."/>
            <person name="Reveron I."/>
            <person name="de Las Rivas B."/>
            <person name="Munoz R."/>
        </authorList>
    </citation>
    <scope>FUNCTION</scope>
    <scope>CATALYTIC ACTIVITY</scope>
    <scope>DISRUPTION PHENOTYPE</scope>
    <scope>INDUCTION</scope>
    <source>
        <strain>ATCC BAA-793 / NCIMB 8826 / WCFS1</strain>
    </source>
</reference>
<name>LPDC_LACPL</name>
<accession>F9US27</accession>
<gene>
    <name evidence="3" type="primary">lpdC</name>
    <name evidence="6" type="synonym">ubiD</name>
    <name evidence="6" type="ordered locus">lp_2945</name>
</gene>
<sequence length="490" mass="54259">MAEQPWDLRRVLDEIKDDPKNYHETDVEVDPNAELSGVYRYIGAGGTVQRPTQEGPAMMFNNVKGFPDTRVLTGLMASRRRVGKMFHHDYQTLGQYLNEAVSNPVAPETVAEADAPAHDVVYKATDEGFDIRKLVAAPTNTPQDAGPYITVGVVFGSSMDKSKSDVTIHRMVLEDKDKLGIYIMPGGRHIGAFAEEYEKANKPMPITINIGLDPAITIGATFEPPTTPFGYNELGVAGAIRNQAVQLVDGVTVDEKAIARSEYTLEGYIMPNERIQEDINTHTGKAMPEFPGYDGDANPALQVIKVTAVTHRKNAIMQSVIGPSEEHVSMAGIPTEASILQLVNRAIPGKVTNVYNPPAGGGKLMTIMQIHKDNEADEGIQRQAALLAFSAFKELKTVILVDEDVDIFDMNDVIWTMNTRFQADQDLMVLSGMRNHPLDPSERPQYDPKSIRFRGMSSKLVIDGTVPFDMKDQFERAQFMKVADWEKYLK</sequence>
<keyword id="KW-0210">Decarboxylase</keyword>
<keyword id="KW-0285">Flavoprotein</keyword>
<keyword id="KW-0288">FMN</keyword>
<keyword id="KW-0456">Lyase</keyword>
<keyword id="KW-0464">Manganese</keyword>
<keyword id="KW-0479">Metal-binding</keyword>
<keyword id="KW-1185">Reference proteome</keyword>
<comment type="function">
    <text evidence="2">Involved in tannin degradation. Catalyzes the decarboxylation of gallic acid and protocatechuic acid to pyrogallol and catechol, respectively.</text>
</comment>
<comment type="catalytic activity">
    <reaction evidence="2">
        <text>3,4,5-trihydroxybenzoate + H(+) = 1,2,3-trihydroxybenzene + CO2</text>
        <dbReference type="Rhea" id="RHEA:12749"/>
        <dbReference type="ChEBI" id="CHEBI:15378"/>
        <dbReference type="ChEBI" id="CHEBI:16164"/>
        <dbReference type="ChEBI" id="CHEBI:16526"/>
        <dbReference type="ChEBI" id="CHEBI:16918"/>
        <dbReference type="EC" id="4.1.1.59"/>
    </reaction>
</comment>
<comment type="catalytic activity">
    <reaction evidence="2">
        <text>3,4-dihydroxybenzoate + H(+) = catechol + CO2</text>
        <dbReference type="Rhea" id="RHEA:22416"/>
        <dbReference type="ChEBI" id="CHEBI:15378"/>
        <dbReference type="ChEBI" id="CHEBI:16526"/>
        <dbReference type="ChEBI" id="CHEBI:18135"/>
        <dbReference type="ChEBI" id="CHEBI:36241"/>
        <dbReference type="EC" id="4.1.1.63"/>
    </reaction>
</comment>
<comment type="cofactor">
    <cofactor evidence="1">
        <name>prenylated FMN</name>
        <dbReference type="ChEBI" id="CHEBI:87746"/>
    </cofactor>
    <text evidence="1">Binds 1 prenylated FMN per subunit.</text>
</comment>
<comment type="cofactor">
    <cofactor evidence="1">
        <name>Mn(2+)</name>
        <dbReference type="ChEBI" id="CHEBI:29035"/>
    </cofactor>
</comment>
<comment type="induction">
    <text evidence="5">By gallic acid.</text>
</comment>
<comment type="disruption phenotype">
    <text evidence="2">Cells lacking this gene are unable to decarboxylate gallic acid and protocatechuic acid.</text>
</comment>
<comment type="miscellaneous">
    <text evidence="2">Gallate decarboxylase does not form a complex composed of Lpdc, LpdB and LpdD. The term subunit has been used in reference to the three-gene operon. Gallate decarboxylase LpdC is the only protein required to yield the gallate decarboxylase activity.</text>
</comment>
<comment type="similarity">
    <text evidence="4">Belongs to the UbiD family.</text>
</comment>
<evidence type="ECO:0000250" key="1">
    <source>
        <dbReference type="UniProtKB" id="P0AAB4"/>
    </source>
</evidence>
<evidence type="ECO:0000269" key="2">
    <source>
    </source>
</evidence>
<evidence type="ECO:0000303" key="3">
    <source>
    </source>
</evidence>
<evidence type="ECO:0000305" key="4"/>
<evidence type="ECO:0000305" key="5">
    <source>
    </source>
</evidence>
<evidence type="ECO:0000312" key="6">
    <source>
        <dbReference type="EMBL" id="CCC80016.1"/>
    </source>
</evidence>
<evidence type="ECO:0000312" key="7">
    <source>
        <dbReference type="Proteomes" id="UP000000432"/>
    </source>
</evidence>
<feature type="chain" id="PRO_0000444026" description="Gallate decarboxylase">
    <location>
        <begin position="1"/>
        <end position="490"/>
    </location>
</feature>
<feature type="active site" description="Proton acceptor" evidence="1">
    <location>
        <position position="289"/>
    </location>
</feature>
<feature type="binding site" evidence="1">
    <location>
        <position position="165"/>
    </location>
    <ligand>
        <name>Mn(2+)</name>
        <dbReference type="ChEBI" id="CHEBI:29035"/>
    </ligand>
</feature>
<feature type="binding site" evidence="1">
    <location>
        <begin position="168"/>
        <end position="170"/>
    </location>
    <ligand>
        <name>prenylated FMN</name>
        <dbReference type="ChEBI" id="CHEBI:87746"/>
    </ligand>
</feature>
<feature type="binding site" evidence="1">
    <location>
        <position position="187"/>
    </location>
    <ligand>
        <name>prenylated FMN</name>
        <dbReference type="ChEBI" id="CHEBI:87746"/>
    </ligand>
</feature>
<feature type="binding site" evidence="1">
    <location>
        <position position="233"/>
    </location>
    <ligand>
        <name>Mn(2+)</name>
        <dbReference type="ChEBI" id="CHEBI:29035"/>
    </ligand>
</feature>
<organism>
    <name type="scientific">Lactiplantibacillus plantarum (strain ATCC BAA-793 / NCIMB 8826 / WCFS1)</name>
    <name type="common">Lactobacillus plantarum</name>
    <dbReference type="NCBI Taxonomy" id="220668"/>
    <lineage>
        <taxon>Bacteria</taxon>
        <taxon>Bacillati</taxon>
        <taxon>Bacillota</taxon>
        <taxon>Bacilli</taxon>
        <taxon>Lactobacillales</taxon>
        <taxon>Lactobacillaceae</taxon>
        <taxon>Lactiplantibacillus</taxon>
    </lineage>
</organism>
<protein>
    <recommendedName>
        <fullName evidence="3">Gallate decarboxylase</fullName>
        <ecNumber evidence="2">4.1.1.59</ecNumber>
    </recommendedName>
    <alternativeName>
        <fullName evidence="3">Gallate decarboxylase catalytic subunit</fullName>
    </alternativeName>
    <alternativeName>
        <fullName evidence="3">Protocatechuate decarboxylase</fullName>
        <ecNumber evidence="2">4.1.1.63</ecNumber>
    </alternativeName>
</protein>
<proteinExistence type="evidence at protein level"/>